<comment type="function">
    <text evidence="1">Catalyzes the transfer of the gamma-phosphate of ATP to D-galactose to form alpha-D-galactose-1-phosphate (Gal-1-P).</text>
</comment>
<comment type="catalytic activity">
    <reaction evidence="1">
        <text>alpha-D-galactose + ATP = alpha-D-galactose 1-phosphate + ADP + H(+)</text>
        <dbReference type="Rhea" id="RHEA:13553"/>
        <dbReference type="ChEBI" id="CHEBI:15378"/>
        <dbReference type="ChEBI" id="CHEBI:28061"/>
        <dbReference type="ChEBI" id="CHEBI:30616"/>
        <dbReference type="ChEBI" id="CHEBI:58336"/>
        <dbReference type="ChEBI" id="CHEBI:456216"/>
        <dbReference type="EC" id="2.7.1.6"/>
    </reaction>
</comment>
<comment type="pathway">
    <text evidence="1">Carbohydrate metabolism; galactose metabolism.</text>
</comment>
<comment type="subcellular location">
    <subcellularLocation>
        <location evidence="1">Cytoplasm</location>
    </subcellularLocation>
</comment>
<comment type="similarity">
    <text evidence="1">Belongs to the GHMP kinase family. GalK subfamily.</text>
</comment>
<accession>Q97NZ6</accession>
<name>GAL1_STRPN</name>
<organism>
    <name type="scientific">Streptococcus pneumoniae serotype 4 (strain ATCC BAA-334 / TIGR4)</name>
    <dbReference type="NCBI Taxonomy" id="170187"/>
    <lineage>
        <taxon>Bacteria</taxon>
        <taxon>Bacillati</taxon>
        <taxon>Bacillota</taxon>
        <taxon>Bacilli</taxon>
        <taxon>Lactobacillales</taxon>
        <taxon>Streptococcaceae</taxon>
        <taxon>Streptococcus</taxon>
    </lineage>
</organism>
<keyword id="KW-0067">ATP-binding</keyword>
<keyword id="KW-0119">Carbohydrate metabolism</keyword>
<keyword id="KW-0963">Cytoplasm</keyword>
<keyword id="KW-0299">Galactose metabolism</keyword>
<keyword id="KW-0418">Kinase</keyword>
<keyword id="KW-0460">Magnesium</keyword>
<keyword id="KW-0479">Metal-binding</keyword>
<keyword id="KW-0547">Nucleotide-binding</keyword>
<keyword id="KW-1185">Reference proteome</keyword>
<keyword id="KW-0808">Transferase</keyword>
<sequence length="392" mass="43584">MAQHLTTEALRKDFLAVFGQEADQTFFSPGRINLIGEHTDYNGGHVFPAAISLGTYGAARKRDDQVLRFYSANFEDKGIIEVPLADLKFEKEHNWTNYPKGVLHFLQEAGHVIDKGFDFYVYGNIPNGAGLSSSASLELLTGVVAEHLFDLKLERLDLVKIGKQTENNFIGVNSGIMDQFAIGMGADQRAIYLDTNTLEYDLVPLDLKDNVVVIMNTNKRRELADSKYNERRAECEKAVEELQVSLDIQTLGELDEWAVDQYSYLIKDENRLKRARHAVLENQRTLKAQVALQAGDLETFGRLMNASHVSLEHDYEVTGLELDTLVHTAWAQEGVLGARMTGAGFGGCAIALVQKDTVEAFKEAVGKHYEEVVGYAPSFYIAEVAGGTRVLD</sequence>
<evidence type="ECO:0000255" key="1">
    <source>
        <dbReference type="HAMAP-Rule" id="MF_00246"/>
    </source>
</evidence>
<reference key="1">
    <citation type="journal article" date="2001" name="Science">
        <title>Complete genome sequence of a virulent isolate of Streptococcus pneumoniae.</title>
        <authorList>
            <person name="Tettelin H."/>
            <person name="Nelson K.E."/>
            <person name="Paulsen I.T."/>
            <person name="Eisen J.A."/>
            <person name="Read T.D."/>
            <person name="Peterson S.N."/>
            <person name="Heidelberg J.F."/>
            <person name="DeBoy R.T."/>
            <person name="Haft D.H."/>
            <person name="Dodson R.J."/>
            <person name="Durkin A.S."/>
            <person name="Gwinn M.L."/>
            <person name="Kolonay J.F."/>
            <person name="Nelson W.C."/>
            <person name="Peterson J.D."/>
            <person name="Umayam L.A."/>
            <person name="White O."/>
            <person name="Salzberg S.L."/>
            <person name="Lewis M.R."/>
            <person name="Radune D."/>
            <person name="Holtzapple E.K."/>
            <person name="Khouri H.M."/>
            <person name="Wolf A.M."/>
            <person name="Utterback T.R."/>
            <person name="Hansen C.L."/>
            <person name="McDonald L.A."/>
            <person name="Feldblyum T.V."/>
            <person name="Angiuoli S.V."/>
            <person name="Dickinson T."/>
            <person name="Hickey E.K."/>
            <person name="Holt I.E."/>
            <person name="Loftus B.J."/>
            <person name="Yang F."/>
            <person name="Smith H.O."/>
            <person name="Venter J.C."/>
            <person name="Dougherty B.A."/>
            <person name="Morrison D.A."/>
            <person name="Hollingshead S.K."/>
            <person name="Fraser C.M."/>
        </authorList>
    </citation>
    <scope>NUCLEOTIDE SEQUENCE [LARGE SCALE GENOMIC DNA]</scope>
    <source>
        <strain>ATCC BAA-334 / TIGR4</strain>
    </source>
</reference>
<dbReference type="EC" id="2.7.1.6" evidence="1"/>
<dbReference type="EMBL" id="AE005672">
    <property type="protein sequence ID" value="AAK75925.1"/>
    <property type="molecule type" value="Genomic_DNA"/>
</dbReference>
<dbReference type="PIR" id="D95216">
    <property type="entry name" value="D95216"/>
</dbReference>
<dbReference type="RefSeq" id="WP_000046997.1">
    <property type="nucleotide sequence ID" value="NZ_CP155539.1"/>
</dbReference>
<dbReference type="SMR" id="Q97NZ6"/>
<dbReference type="PaxDb" id="170187-SP_1853"/>
<dbReference type="EnsemblBacteria" id="AAK75925">
    <property type="protein sequence ID" value="AAK75925"/>
    <property type="gene ID" value="SP_1853"/>
</dbReference>
<dbReference type="KEGG" id="spn:SP_1853"/>
<dbReference type="eggNOG" id="COG0153">
    <property type="taxonomic scope" value="Bacteria"/>
</dbReference>
<dbReference type="PhylomeDB" id="Q97NZ6"/>
<dbReference type="BioCyc" id="SPNE170187:G1FZB-1883-MONOMER"/>
<dbReference type="UniPathway" id="UPA00214"/>
<dbReference type="Proteomes" id="UP000000585">
    <property type="component" value="Chromosome"/>
</dbReference>
<dbReference type="GO" id="GO:0005829">
    <property type="term" value="C:cytosol"/>
    <property type="evidence" value="ECO:0007669"/>
    <property type="project" value="TreeGrafter"/>
</dbReference>
<dbReference type="GO" id="GO:0005524">
    <property type="term" value="F:ATP binding"/>
    <property type="evidence" value="ECO:0007669"/>
    <property type="project" value="UniProtKB-UniRule"/>
</dbReference>
<dbReference type="GO" id="GO:0004335">
    <property type="term" value="F:galactokinase activity"/>
    <property type="evidence" value="ECO:0007669"/>
    <property type="project" value="UniProtKB-UniRule"/>
</dbReference>
<dbReference type="GO" id="GO:0000287">
    <property type="term" value="F:magnesium ion binding"/>
    <property type="evidence" value="ECO:0007669"/>
    <property type="project" value="UniProtKB-UniRule"/>
</dbReference>
<dbReference type="GO" id="GO:0006012">
    <property type="term" value="P:galactose metabolic process"/>
    <property type="evidence" value="ECO:0007669"/>
    <property type="project" value="UniProtKB-UniRule"/>
</dbReference>
<dbReference type="FunFam" id="3.30.230.10:FF:000017">
    <property type="entry name" value="Galactokinase"/>
    <property type="match status" value="1"/>
</dbReference>
<dbReference type="FunFam" id="3.30.70.890:FF:000001">
    <property type="entry name" value="Galactokinase"/>
    <property type="match status" value="1"/>
</dbReference>
<dbReference type="Gene3D" id="3.30.230.10">
    <property type="match status" value="1"/>
</dbReference>
<dbReference type="Gene3D" id="3.30.70.890">
    <property type="entry name" value="GHMP kinase, C-terminal domain"/>
    <property type="match status" value="1"/>
</dbReference>
<dbReference type="HAMAP" id="MF_00246">
    <property type="entry name" value="Galactokinase"/>
    <property type="match status" value="1"/>
</dbReference>
<dbReference type="InterPro" id="IPR000705">
    <property type="entry name" value="Galactokinase"/>
</dbReference>
<dbReference type="InterPro" id="IPR022963">
    <property type="entry name" value="Galactokinase_bac"/>
</dbReference>
<dbReference type="InterPro" id="IPR019741">
    <property type="entry name" value="Galactokinase_CS"/>
</dbReference>
<dbReference type="InterPro" id="IPR019539">
    <property type="entry name" value="GalKase_N"/>
</dbReference>
<dbReference type="InterPro" id="IPR013750">
    <property type="entry name" value="GHMP_kinase_C_dom"/>
</dbReference>
<dbReference type="InterPro" id="IPR036554">
    <property type="entry name" value="GHMP_kinase_C_sf"/>
</dbReference>
<dbReference type="InterPro" id="IPR006204">
    <property type="entry name" value="GHMP_kinase_N_dom"/>
</dbReference>
<dbReference type="InterPro" id="IPR006203">
    <property type="entry name" value="GHMP_knse_ATP-bd_CS"/>
</dbReference>
<dbReference type="InterPro" id="IPR006206">
    <property type="entry name" value="Mevalonate/galactokinase"/>
</dbReference>
<dbReference type="InterPro" id="IPR020568">
    <property type="entry name" value="Ribosomal_Su5_D2-typ_SF"/>
</dbReference>
<dbReference type="InterPro" id="IPR014721">
    <property type="entry name" value="Ribsml_uS5_D2-typ_fold_subgr"/>
</dbReference>
<dbReference type="NCBIfam" id="TIGR00131">
    <property type="entry name" value="gal_kin"/>
    <property type="match status" value="1"/>
</dbReference>
<dbReference type="NCBIfam" id="NF003705">
    <property type="entry name" value="PRK05322.1"/>
    <property type="match status" value="1"/>
</dbReference>
<dbReference type="PANTHER" id="PTHR10457:SF7">
    <property type="entry name" value="GALACTOKINASE-RELATED"/>
    <property type="match status" value="1"/>
</dbReference>
<dbReference type="PANTHER" id="PTHR10457">
    <property type="entry name" value="MEVALONATE KINASE/GALACTOKINASE"/>
    <property type="match status" value="1"/>
</dbReference>
<dbReference type="Pfam" id="PF10509">
    <property type="entry name" value="GalKase_gal_bdg"/>
    <property type="match status" value="1"/>
</dbReference>
<dbReference type="Pfam" id="PF08544">
    <property type="entry name" value="GHMP_kinases_C"/>
    <property type="match status" value="1"/>
</dbReference>
<dbReference type="Pfam" id="PF00288">
    <property type="entry name" value="GHMP_kinases_N"/>
    <property type="match status" value="1"/>
</dbReference>
<dbReference type="PIRSF" id="PIRSF000530">
    <property type="entry name" value="Galactokinase"/>
    <property type="match status" value="1"/>
</dbReference>
<dbReference type="PRINTS" id="PR00473">
    <property type="entry name" value="GALCTOKINASE"/>
</dbReference>
<dbReference type="PRINTS" id="PR00959">
    <property type="entry name" value="MEVGALKINASE"/>
</dbReference>
<dbReference type="SUPFAM" id="SSF55060">
    <property type="entry name" value="GHMP Kinase, C-terminal domain"/>
    <property type="match status" value="1"/>
</dbReference>
<dbReference type="SUPFAM" id="SSF54211">
    <property type="entry name" value="Ribosomal protein S5 domain 2-like"/>
    <property type="match status" value="1"/>
</dbReference>
<dbReference type="PROSITE" id="PS00106">
    <property type="entry name" value="GALACTOKINASE"/>
    <property type="match status" value="1"/>
</dbReference>
<dbReference type="PROSITE" id="PS00627">
    <property type="entry name" value="GHMP_KINASES_ATP"/>
    <property type="match status" value="1"/>
</dbReference>
<proteinExistence type="inferred from homology"/>
<feature type="chain" id="PRO_0000184628" description="Galactokinase">
    <location>
        <begin position="1"/>
        <end position="392"/>
    </location>
</feature>
<feature type="active site" description="Proton acceptor" evidence="1">
    <location>
        <position position="178"/>
    </location>
</feature>
<feature type="binding site" evidence="1">
    <location>
        <begin position="37"/>
        <end position="40"/>
    </location>
    <ligand>
        <name>substrate</name>
    </ligand>
</feature>
<feature type="binding site" evidence="1">
    <location>
        <position position="71"/>
    </location>
    <ligand>
        <name>ATP</name>
        <dbReference type="ChEBI" id="CHEBI:30616"/>
    </ligand>
</feature>
<feature type="binding site" evidence="1">
    <location>
        <begin position="128"/>
        <end position="134"/>
    </location>
    <ligand>
        <name>ATP</name>
        <dbReference type="ChEBI" id="CHEBI:30616"/>
    </ligand>
</feature>
<feature type="binding site" evidence="1">
    <location>
        <position position="134"/>
    </location>
    <ligand>
        <name>Mg(2+)</name>
        <dbReference type="ChEBI" id="CHEBI:18420"/>
    </ligand>
</feature>
<feature type="binding site" evidence="1">
    <location>
        <position position="166"/>
    </location>
    <ligand>
        <name>Mg(2+)</name>
        <dbReference type="ChEBI" id="CHEBI:18420"/>
    </ligand>
</feature>
<feature type="binding site" evidence="1">
    <location>
        <position position="228"/>
    </location>
    <ligand>
        <name>substrate</name>
    </ligand>
</feature>
<feature type="site" description="Transition state stabilizer" evidence="1">
    <location>
        <position position="31"/>
    </location>
</feature>
<gene>
    <name evidence="1" type="primary">galK</name>
    <name type="ordered locus">SP_1853</name>
</gene>
<protein>
    <recommendedName>
        <fullName evidence="1">Galactokinase</fullName>
        <ecNumber evidence="1">2.7.1.6</ecNumber>
    </recommendedName>
    <alternativeName>
        <fullName evidence="1">Galactose kinase</fullName>
    </alternativeName>
</protein>